<accession>Q11KK8</accession>
<proteinExistence type="inferred from homology"/>
<name>TRPF_CHESB</name>
<reference key="1">
    <citation type="submission" date="2006-06" db="EMBL/GenBank/DDBJ databases">
        <title>Complete sequence of chromosome of Mesorhizobium sp. BNC1.</title>
        <authorList>
            <consortium name="US DOE Joint Genome Institute"/>
            <person name="Copeland A."/>
            <person name="Lucas S."/>
            <person name="Lapidus A."/>
            <person name="Barry K."/>
            <person name="Detter J.C."/>
            <person name="Glavina del Rio T."/>
            <person name="Hammon N."/>
            <person name="Israni S."/>
            <person name="Dalin E."/>
            <person name="Tice H."/>
            <person name="Pitluck S."/>
            <person name="Chertkov O."/>
            <person name="Brettin T."/>
            <person name="Bruce D."/>
            <person name="Han C."/>
            <person name="Tapia R."/>
            <person name="Gilna P."/>
            <person name="Schmutz J."/>
            <person name="Larimer F."/>
            <person name="Land M."/>
            <person name="Hauser L."/>
            <person name="Kyrpides N."/>
            <person name="Mikhailova N."/>
            <person name="Richardson P."/>
        </authorList>
    </citation>
    <scope>NUCLEOTIDE SEQUENCE [LARGE SCALE GENOMIC DNA]</scope>
    <source>
        <strain>BNC1</strain>
    </source>
</reference>
<evidence type="ECO:0000255" key="1">
    <source>
        <dbReference type="HAMAP-Rule" id="MF_00135"/>
    </source>
</evidence>
<feature type="chain" id="PRO_1000018608" description="N-(5'-phosphoribosyl)anthranilate isomerase">
    <location>
        <begin position="1"/>
        <end position="218"/>
    </location>
</feature>
<gene>
    <name evidence="1" type="primary">trpF</name>
    <name type="ordered locus">Meso_0667</name>
</gene>
<protein>
    <recommendedName>
        <fullName evidence="1">N-(5'-phosphoribosyl)anthranilate isomerase</fullName>
        <shortName evidence="1">PRAI</shortName>
        <ecNumber evidence="1">5.3.1.24</ecNumber>
    </recommendedName>
</protein>
<dbReference type="EC" id="5.3.1.24" evidence="1"/>
<dbReference type="EMBL" id="CP000390">
    <property type="protein sequence ID" value="ABG62067.1"/>
    <property type="molecule type" value="Genomic_DNA"/>
</dbReference>
<dbReference type="SMR" id="Q11KK8"/>
<dbReference type="STRING" id="266779.Meso_0667"/>
<dbReference type="KEGG" id="mes:Meso_0667"/>
<dbReference type="eggNOG" id="COG0135">
    <property type="taxonomic scope" value="Bacteria"/>
</dbReference>
<dbReference type="HOGENOM" id="CLU_076364_1_1_5"/>
<dbReference type="OrthoDB" id="9796196at2"/>
<dbReference type="UniPathway" id="UPA00035">
    <property type="reaction ID" value="UER00042"/>
</dbReference>
<dbReference type="GO" id="GO:0004640">
    <property type="term" value="F:phosphoribosylanthranilate isomerase activity"/>
    <property type="evidence" value="ECO:0007669"/>
    <property type="project" value="UniProtKB-UniRule"/>
</dbReference>
<dbReference type="GO" id="GO:0000162">
    <property type="term" value="P:L-tryptophan biosynthetic process"/>
    <property type="evidence" value="ECO:0007669"/>
    <property type="project" value="UniProtKB-UniRule"/>
</dbReference>
<dbReference type="CDD" id="cd00405">
    <property type="entry name" value="PRAI"/>
    <property type="match status" value="1"/>
</dbReference>
<dbReference type="Gene3D" id="3.20.20.70">
    <property type="entry name" value="Aldolase class I"/>
    <property type="match status" value="1"/>
</dbReference>
<dbReference type="HAMAP" id="MF_00135">
    <property type="entry name" value="PRAI"/>
    <property type="match status" value="1"/>
</dbReference>
<dbReference type="InterPro" id="IPR013785">
    <property type="entry name" value="Aldolase_TIM"/>
</dbReference>
<dbReference type="InterPro" id="IPR001240">
    <property type="entry name" value="PRAI_dom"/>
</dbReference>
<dbReference type="InterPro" id="IPR011060">
    <property type="entry name" value="RibuloseP-bd_barrel"/>
</dbReference>
<dbReference type="InterPro" id="IPR044643">
    <property type="entry name" value="TrpF_fam"/>
</dbReference>
<dbReference type="NCBIfam" id="NF002295">
    <property type="entry name" value="PRK01222.1-1"/>
    <property type="match status" value="1"/>
</dbReference>
<dbReference type="PANTHER" id="PTHR42894">
    <property type="entry name" value="N-(5'-PHOSPHORIBOSYL)ANTHRANILATE ISOMERASE"/>
    <property type="match status" value="1"/>
</dbReference>
<dbReference type="PANTHER" id="PTHR42894:SF1">
    <property type="entry name" value="N-(5'-PHOSPHORIBOSYL)ANTHRANILATE ISOMERASE"/>
    <property type="match status" value="1"/>
</dbReference>
<dbReference type="Pfam" id="PF00697">
    <property type="entry name" value="PRAI"/>
    <property type="match status" value="1"/>
</dbReference>
<dbReference type="SUPFAM" id="SSF51366">
    <property type="entry name" value="Ribulose-phoshate binding barrel"/>
    <property type="match status" value="1"/>
</dbReference>
<comment type="catalytic activity">
    <reaction evidence="1">
        <text>N-(5-phospho-beta-D-ribosyl)anthranilate = 1-(2-carboxyphenylamino)-1-deoxy-D-ribulose 5-phosphate</text>
        <dbReference type="Rhea" id="RHEA:21540"/>
        <dbReference type="ChEBI" id="CHEBI:18277"/>
        <dbReference type="ChEBI" id="CHEBI:58613"/>
        <dbReference type="EC" id="5.3.1.24"/>
    </reaction>
</comment>
<comment type="pathway">
    <text evidence="1">Amino-acid biosynthesis; L-tryptophan biosynthesis; L-tryptophan from chorismate: step 3/5.</text>
</comment>
<comment type="similarity">
    <text evidence="1">Belongs to the TrpF family.</text>
</comment>
<sequence>MQLDIKICGLKTEDAIAAALDGGASHVGFIFFPKSPRNVDIETAARLRHLASGRAQAVAVTVDADDEMLDRIVEGMRPDVLQLHGHERPVRVEALKKRYHLPVMKAVSVREASDLEVLPAYRGVADRFLLDAKPPAGAELPGGNGIPFDWSLLASLDGKVDYMLSGGLSAVNIGEALSIARPRGIDISSGVERAPGEKDPDLIRAFFSAVRAARGKRE</sequence>
<organism>
    <name type="scientific">Chelativorans sp. (strain BNC1)</name>
    <dbReference type="NCBI Taxonomy" id="266779"/>
    <lineage>
        <taxon>Bacteria</taxon>
        <taxon>Pseudomonadati</taxon>
        <taxon>Pseudomonadota</taxon>
        <taxon>Alphaproteobacteria</taxon>
        <taxon>Hyphomicrobiales</taxon>
        <taxon>Phyllobacteriaceae</taxon>
        <taxon>Chelativorans</taxon>
    </lineage>
</organism>
<keyword id="KW-0028">Amino-acid biosynthesis</keyword>
<keyword id="KW-0057">Aromatic amino acid biosynthesis</keyword>
<keyword id="KW-0413">Isomerase</keyword>
<keyword id="KW-0822">Tryptophan biosynthesis</keyword>